<feature type="chain" id="PRO_0000368421" description="ATP synthase subunit b">
    <location>
        <begin position="1"/>
        <end position="159"/>
    </location>
</feature>
<feature type="transmembrane region" description="Helical" evidence="1">
    <location>
        <begin position="2"/>
        <end position="22"/>
    </location>
</feature>
<accession>A7FQH5</accession>
<organism>
    <name type="scientific">Clostridium botulinum (strain ATCC 19397 / Type A)</name>
    <dbReference type="NCBI Taxonomy" id="441770"/>
    <lineage>
        <taxon>Bacteria</taxon>
        <taxon>Bacillati</taxon>
        <taxon>Bacillota</taxon>
        <taxon>Clostridia</taxon>
        <taxon>Eubacteriales</taxon>
        <taxon>Clostridiaceae</taxon>
        <taxon>Clostridium</taxon>
    </lineage>
</organism>
<comment type="function">
    <text evidence="1">F(1)F(0) ATP synthase produces ATP from ADP in the presence of a proton or sodium gradient. F-type ATPases consist of two structural domains, F(1) containing the extramembraneous catalytic core and F(0) containing the membrane proton channel, linked together by a central stalk and a peripheral stalk. During catalysis, ATP synthesis in the catalytic domain of F(1) is coupled via a rotary mechanism of the central stalk subunits to proton translocation.</text>
</comment>
<comment type="function">
    <text evidence="1">Component of the F(0) channel, it forms part of the peripheral stalk, linking F(1) to F(0).</text>
</comment>
<comment type="subunit">
    <text evidence="1">F-type ATPases have 2 components, F(1) - the catalytic core - and F(0) - the membrane proton channel. F(1) has five subunits: alpha(3), beta(3), gamma(1), delta(1), epsilon(1). F(0) has three main subunits: a(1), b(2) and c(10-14). The alpha and beta chains form an alternating ring which encloses part of the gamma chain. F(1) is attached to F(0) by a central stalk formed by the gamma and epsilon chains, while a peripheral stalk is formed by the delta and b chains.</text>
</comment>
<comment type="subcellular location">
    <subcellularLocation>
        <location evidence="1">Cell membrane</location>
        <topology evidence="1">Single-pass membrane protein</topology>
    </subcellularLocation>
</comment>
<comment type="similarity">
    <text evidence="1">Belongs to the ATPase B chain family.</text>
</comment>
<sequence length="159" mass="18366">MNISIPQIIAAILNFIILLLIVKHFWFDKITAVVDSRQSEIINKIEDTDKNQKLALELKEKNELELSNAKKQGKTIVEEYKSKAENVYEDIVKEAHEEADRIIKKSRLEAERQKKNAEEEIRAEAVELAVLVSSKTLEKTIDDLEHRRLIKDFISKVGI</sequence>
<name>ATPF_CLOB1</name>
<keyword id="KW-0066">ATP synthesis</keyword>
<keyword id="KW-1003">Cell membrane</keyword>
<keyword id="KW-0138">CF(0)</keyword>
<keyword id="KW-0375">Hydrogen ion transport</keyword>
<keyword id="KW-0406">Ion transport</keyword>
<keyword id="KW-0472">Membrane</keyword>
<keyword id="KW-0812">Transmembrane</keyword>
<keyword id="KW-1133">Transmembrane helix</keyword>
<keyword id="KW-0813">Transport</keyword>
<gene>
    <name evidence="1" type="primary">atpF</name>
    <name type="ordered locus">CLB_0188</name>
</gene>
<evidence type="ECO:0000255" key="1">
    <source>
        <dbReference type="HAMAP-Rule" id="MF_01398"/>
    </source>
</evidence>
<proteinExistence type="inferred from homology"/>
<reference key="1">
    <citation type="journal article" date="2007" name="PLoS ONE">
        <title>Analysis of the neurotoxin complex genes in Clostridium botulinum A1-A4 and B1 strains: BoNT/A3, /Ba4 and /B1 clusters are located within plasmids.</title>
        <authorList>
            <person name="Smith T.J."/>
            <person name="Hill K.K."/>
            <person name="Foley B.T."/>
            <person name="Detter J.C."/>
            <person name="Munk A.C."/>
            <person name="Bruce D.C."/>
            <person name="Doggett N.A."/>
            <person name="Smith L.A."/>
            <person name="Marks J.D."/>
            <person name="Xie G."/>
            <person name="Brettin T.S."/>
        </authorList>
    </citation>
    <scope>NUCLEOTIDE SEQUENCE [LARGE SCALE GENOMIC DNA]</scope>
    <source>
        <strain>ATCC 19397 / Type A</strain>
    </source>
</reference>
<protein>
    <recommendedName>
        <fullName evidence="1">ATP synthase subunit b</fullName>
    </recommendedName>
    <alternativeName>
        <fullName evidence="1">ATP synthase F(0) sector subunit b</fullName>
    </alternativeName>
    <alternativeName>
        <fullName evidence="1">ATPase subunit I</fullName>
    </alternativeName>
    <alternativeName>
        <fullName evidence="1">F-type ATPase subunit b</fullName>
        <shortName evidence="1">F-ATPase subunit b</shortName>
    </alternativeName>
</protein>
<dbReference type="EMBL" id="CP000726">
    <property type="protein sequence ID" value="ABS33930.1"/>
    <property type="molecule type" value="Genomic_DNA"/>
</dbReference>
<dbReference type="RefSeq" id="WP_003355885.1">
    <property type="nucleotide sequence ID" value="NC_009697.1"/>
</dbReference>
<dbReference type="SMR" id="A7FQH5"/>
<dbReference type="KEGG" id="cba:CLB_0188"/>
<dbReference type="HOGENOM" id="CLU_079215_4_0_9"/>
<dbReference type="GO" id="GO:0005886">
    <property type="term" value="C:plasma membrane"/>
    <property type="evidence" value="ECO:0007669"/>
    <property type="project" value="UniProtKB-SubCell"/>
</dbReference>
<dbReference type="GO" id="GO:0045259">
    <property type="term" value="C:proton-transporting ATP synthase complex"/>
    <property type="evidence" value="ECO:0007669"/>
    <property type="project" value="UniProtKB-KW"/>
</dbReference>
<dbReference type="GO" id="GO:0046933">
    <property type="term" value="F:proton-transporting ATP synthase activity, rotational mechanism"/>
    <property type="evidence" value="ECO:0007669"/>
    <property type="project" value="UniProtKB-UniRule"/>
</dbReference>
<dbReference type="GO" id="GO:0046961">
    <property type="term" value="F:proton-transporting ATPase activity, rotational mechanism"/>
    <property type="evidence" value="ECO:0007669"/>
    <property type="project" value="TreeGrafter"/>
</dbReference>
<dbReference type="CDD" id="cd06503">
    <property type="entry name" value="ATP-synt_Fo_b"/>
    <property type="match status" value="1"/>
</dbReference>
<dbReference type="Gene3D" id="1.20.5.620">
    <property type="entry name" value="F1F0 ATP synthase subunit B, membrane domain"/>
    <property type="match status" value="1"/>
</dbReference>
<dbReference type="HAMAP" id="MF_01398">
    <property type="entry name" value="ATP_synth_b_bprime"/>
    <property type="match status" value="1"/>
</dbReference>
<dbReference type="InterPro" id="IPR028987">
    <property type="entry name" value="ATP_synth_B-like_membr_sf"/>
</dbReference>
<dbReference type="InterPro" id="IPR002146">
    <property type="entry name" value="ATP_synth_b/b'su_bac/chlpt"/>
</dbReference>
<dbReference type="InterPro" id="IPR005864">
    <property type="entry name" value="ATP_synth_F0_bsu_bac"/>
</dbReference>
<dbReference type="InterPro" id="IPR050059">
    <property type="entry name" value="ATP_synthase_B_chain"/>
</dbReference>
<dbReference type="NCBIfam" id="TIGR01144">
    <property type="entry name" value="ATP_synt_b"/>
    <property type="match status" value="1"/>
</dbReference>
<dbReference type="NCBIfam" id="NF009992">
    <property type="entry name" value="PRK13461.1"/>
    <property type="match status" value="1"/>
</dbReference>
<dbReference type="PANTHER" id="PTHR33445:SF1">
    <property type="entry name" value="ATP SYNTHASE SUBUNIT B"/>
    <property type="match status" value="1"/>
</dbReference>
<dbReference type="PANTHER" id="PTHR33445">
    <property type="entry name" value="ATP SYNTHASE SUBUNIT B', CHLOROPLASTIC"/>
    <property type="match status" value="1"/>
</dbReference>
<dbReference type="Pfam" id="PF00430">
    <property type="entry name" value="ATP-synt_B"/>
    <property type="match status" value="1"/>
</dbReference>
<dbReference type="SUPFAM" id="SSF81573">
    <property type="entry name" value="F1F0 ATP synthase subunit B, membrane domain"/>
    <property type="match status" value="1"/>
</dbReference>